<protein>
    <recommendedName>
        <fullName>Accessory gene regulator A</fullName>
    </recommendedName>
</protein>
<name>AGRA_STAAM</name>
<dbReference type="EMBL" id="BA000017">
    <property type="protein sequence ID" value="BAB58201.1"/>
    <property type="molecule type" value="Genomic_DNA"/>
</dbReference>
<dbReference type="RefSeq" id="WP_000688493.1">
    <property type="nucleotide sequence ID" value="NC_002758.2"/>
</dbReference>
<dbReference type="SMR" id="Q931H9"/>
<dbReference type="KEGG" id="sav:SAV2039"/>
<dbReference type="HOGENOM" id="CLU_000445_14_6_9"/>
<dbReference type="PhylomeDB" id="Q931H9"/>
<dbReference type="PRO" id="PR:Q931H9"/>
<dbReference type="Proteomes" id="UP000002481">
    <property type="component" value="Chromosome"/>
</dbReference>
<dbReference type="GO" id="GO:0005737">
    <property type="term" value="C:cytoplasm"/>
    <property type="evidence" value="ECO:0007669"/>
    <property type="project" value="UniProtKB-SubCell"/>
</dbReference>
<dbReference type="GO" id="GO:0003677">
    <property type="term" value="F:DNA binding"/>
    <property type="evidence" value="ECO:0007669"/>
    <property type="project" value="UniProtKB-KW"/>
</dbReference>
<dbReference type="GO" id="GO:0000156">
    <property type="term" value="F:phosphorelay response regulator activity"/>
    <property type="evidence" value="ECO:0007669"/>
    <property type="project" value="InterPro"/>
</dbReference>
<dbReference type="CDD" id="cd17533">
    <property type="entry name" value="REC_LytTR_AgrA-like"/>
    <property type="match status" value="1"/>
</dbReference>
<dbReference type="FunFam" id="2.40.50.1020:FF:000005">
    <property type="entry name" value="Accessory gene regulator A"/>
    <property type="match status" value="1"/>
</dbReference>
<dbReference type="Gene3D" id="3.40.50.2300">
    <property type="match status" value="1"/>
</dbReference>
<dbReference type="Gene3D" id="2.40.50.1020">
    <property type="entry name" value="LytTr DNA-binding domain"/>
    <property type="match status" value="1"/>
</dbReference>
<dbReference type="InterPro" id="IPR011006">
    <property type="entry name" value="CheY-like_superfamily"/>
</dbReference>
<dbReference type="InterPro" id="IPR046947">
    <property type="entry name" value="LytR-like"/>
</dbReference>
<dbReference type="InterPro" id="IPR007492">
    <property type="entry name" value="LytTR_DNA-bd_dom"/>
</dbReference>
<dbReference type="InterPro" id="IPR001789">
    <property type="entry name" value="Sig_transdc_resp-reg_receiver"/>
</dbReference>
<dbReference type="NCBIfam" id="NF046049">
    <property type="entry name" value="quorum_RR_AgrA"/>
    <property type="match status" value="1"/>
</dbReference>
<dbReference type="PANTHER" id="PTHR37299:SF3">
    <property type="entry name" value="STAGE 0 SPORULATION PROTEIN A HOMOLOG"/>
    <property type="match status" value="1"/>
</dbReference>
<dbReference type="PANTHER" id="PTHR37299">
    <property type="entry name" value="TRANSCRIPTIONAL REGULATOR-RELATED"/>
    <property type="match status" value="1"/>
</dbReference>
<dbReference type="Pfam" id="PF04397">
    <property type="entry name" value="LytTR"/>
    <property type="match status" value="1"/>
</dbReference>
<dbReference type="Pfam" id="PF00072">
    <property type="entry name" value="Response_reg"/>
    <property type="match status" value="1"/>
</dbReference>
<dbReference type="SMART" id="SM00850">
    <property type="entry name" value="LytTR"/>
    <property type="match status" value="1"/>
</dbReference>
<dbReference type="SMART" id="SM00448">
    <property type="entry name" value="REC"/>
    <property type="match status" value="1"/>
</dbReference>
<dbReference type="SUPFAM" id="SSF52172">
    <property type="entry name" value="CheY-like"/>
    <property type="match status" value="1"/>
</dbReference>
<dbReference type="PROSITE" id="PS50930">
    <property type="entry name" value="HTH_LYTTR"/>
    <property type="match status" value="1"/>
</dbReference>
<dbReference type="PROSITE" id="PS50110">
    <property type="entry name" value="RESPONSE_REGULATORY"/>
    <property type="match status" value="1"/>
</dbReference>
<gene>
    <name type="primary">agrA</name>
    <name type="ordered locus">SAV2039</name>
</gene>
<evidence type="ECO:0000250" key="1"/>
<evidence type="ECO:0000255" key="2">
    <source>
        <dbReference type="PROSITE-ProRule" id="PRU00112"/>
    </source>
</evidence>
<evidence type="ECO:0000255" key="3">
    <source>
        <dbReference type="PROSITE-ProRule" id="PRU00169"/>
    </source>
</evidence>
<keyword id="KW-0010">Activator</keyword>
<keyword id="KW-0963">Cytoplasm</keyword>
<keyword id="KW-0238">DNA-binding</keyword>
<keyword id="KW-0597">Phosphoprotein</keyword>
<keyword id="KW-0804">Transcription</keyword>
<keyword id="KW-0805">Transcription regulation</keyword>
<keyword id="KW-0902">Two-component regulatory system</keyword>
<sequence>MKIFICEDDPKQRENMVTIIKNYIMIEEKPMEIALATDNPYEVLEQAKNMNDIGCYFLDIQLSTDINGIKLGSEIRKHDPVGNIIFVTSHSELTYLTFVYKVAAMDFIFKDDPAELRTRIIDCLETAHTRLQLLSKDNSVETIELKRGSNSVYVQYDDIMFFESSTKSHRLIAHLDNRQIEFYGNLKELSQLDDRFFRCHNSFVVNRHNIESIDSKERIVYFKNKEHCYASVRNVKKK</sequence>
<proteinExistence type="inferred from homology"/>
<accession>Q931H9</accession>
<reference key="1">
    <citation type="journal article" date="2001" name="Lancet">
        <title>Whole genome sequencing of meticillin-resistant Staphylococcus aureus.</title>
        <authorList>
            <person name="Kuroda M."/>
            <person name="Ohta T."/>
            <person name="Uchiyama I."/>
            <person name="Baba T."/>
            <person name="Yuzawa H."/>
            <person name="Kobayashi I."/>
            <person name="Cui L."/>
            <person name="Oguchi A."/>
            <person name="Aoki K."/>
            <person name="Nagai Y."/>
            <person name="Lian J.-Q."/>
            <person name="Ito T."/>
            <person name="Kanamori M."/>
            <person name="Matsumaru H."/>
            <person name="Maruyama A."/>
            <person name="Murakami H."/>
            <person name="Hosoyama A."/>
            <person name="Mizutani-Ui Y."/>
            <person name="Takahashi N.K."/>
            <person name="Sawano T."/>
            <person name="Inoue R."/>
            <person name="Kaito C."/>
            <person name="Sekimizu K."/>
            <person name="Hirakawa H."/>
            <person name="Kuhara S."/>
            <person name="Goto S."/>
            <person name="Yabuzaki J."/>
            <person name="Kanehisa M."/>
            <person name="Yamashita A."/>
            <person name="Oshima K."/>
            <person name="Furuya K."/>
            <person name="Yoshino C."/>
            <person name="Shiba T."/>
            <person name="Hattori M."/>
            <person name="Ogasawara N."/>
            <person name="Hayashi H."/>
            <person name="Hiramatsu K."/>
        </authorList>
    </citation>
    <scope>NUCLEOTIDE SEQUENCE [LARGE SCALE GENOMIC DNA]</scope>
    <source>
        <strain>Mu50 / ATCC 700699</strain>
    </source>
</reference>
<comment type="function">
    <text evidence="1">Required for high-level post-exponential phase expression of a series of secreted proteins.</text>
</comment>
<comment type="subcellular location">
    <subcellularLocation>
        <location evidence="1">Cytoplasm</location>
    </subcellularLocation>
</comment>
<organism>
    <name type="scientific">Staphylococcus aureus (strain Mu50 / ATCC 700699)</name>
    <dbReference type="NCBI Taxonomy" id="158878"/>
    <lineage>
        <taxon>Bacteria</taxon>
        <taxon>Bacillati</taxon>
        <taxon>Bacillota</taxon>
        <taxon>Bacilli</taxon>
        <taxon>Bacillales</taxon>
        <taxon>Staphylococcaceae</taxon>
        <taxon>Staphylococcus</taxon>
    </lineage>
</organism>
<feature type="chain" id="PRO_0000080996" description="Accessory gene regulator A">
    <location>
        <begin position="1"/>
        <end position="238"/>
    </location>
</feature>
<feature type="domain" description="Response regulatory" evidence="3">
    <location>
        <begin position="2"/>
        <end position="125"/>
    </location>
</feature>
<feature type="domain" description="HTH LytTR-type" evidence="2">
    <location>
        <begin position="143"/>
        <end position="238"/>
    </location>
</feature>
<feature type="modified residue" description="4-aspartylphosphate" evidence="3">
    <location>
        <position position="59"/>
    </location>
</feature>